<reference key="1">
    <citation type="journal article" date="2003" name="Proc. Natl. Acad. Sci. U.S.A.">
        <title>Complete genome sequence of Lactobacillus plantarum WCFS1.</title>
        <authorList>
            <person name="Kleerebezem M."/>
            <person name="Boekhorst J."/>
            <person name="van Kranenburg R."/>
            <person name="Molenaar D."/>
            <person name="Kuipers O.P."/>
            <person name="Leer R."/>
            <person name="Tarchini R."/>
            <person name="Peters S.A."/>
            <person name="Sandbrink H.M."/>
            <person name="Fiers M.W.E.J."/>
            <person name="Stiekema W."/>
            <person name="Klein Lankhorst R.M."/>
            <person name="Bron P.A."/>
            <person name="Hoffer S.M."/>
            <person name="Nierop Groot M.N."/>
            <person name="Kerkhoven R."/>
            <person name="De Vries M."/>
            <person name="Ursing B."/>
            <person name="De Vos W.M."/>
            <person name="Siezen R.J."/>
        </authorList>
    </citation>
    <scope>NUCLEOTIDE SEQUENCE [LARGE SCALE GENOMIC DNA]</scope>
    <source>
        <strain>ATCC BAA-793 / NCIMB 8826 / WCFS1</strain>
    </source>
</reference>
<reference key="2">
    <citation type="journal article" date="2012" name="J. Bacteriol.">
        <title>Complete resequencing and reannotation of the Lactobacillus plantarum WCFS1 genome.</title>
        <authorList>
            <person name="Siezen R.J."/>
            <person name="Francke C."/>
            <person name="Renckens B."/>
            <person name="Boekhorst J."/>
            <person name="Wels M."/>
            <person name="Kleerebezem M."/>
            <person name="van Hijum S.A."/>
        </authorList>
    </citation>
    <scope>NUCLEOTIDE SEQUENCE [LARGE SCALE GENOMIC DNA]</scope>
    <scope>GENOME REANNOTATION</scope>
    <source>
        <strain>ATCC BAA-793 / NCIMB 8826 / WCFS1</strain>
    </source>
</reference>
<sequence>MPIYNFSAGPAVLPQPVITQIQAELPSFRDSGMSILEISHRSDLFAQVLQDAEQDLRDLMAIPDNYHVLFFQGGGTLQFTAAPLNLAPHHRIGLLDSGHWAQRAADEAKRVGTKVTILGSSAANHFNQLPTVVQPIDQSLDYIHLTTNNTIEGTMMTRLPVTGQVPLVADMSSNFLGEPYQVSDFGLIFAGAQKNLGPAGLTIVIVRDDLIGQVANLPSMLDYQLFAAKDSMFNTPPVFAIYAAGLVLKWLKAQGGLSTMTARNHAKAALLYDFLDQSQLFTNPVKTSDRSTMNVPFVTGQADLDAAVIQGAREHGLLNLKGHRLVGGMRASLYNAMPLAGVQALVDYLAAFEAHHR</sequence>
<evidence type="ECO:0000255" key="1">
    <source>
        <dbReference type="HAMAP-Rule" id="MF_00160"/>
    </source>
</evidence>
<keyword id="KW-0028">Amino-acid biosynthesis</keyword>
<keyword id="KW-0032">Aminotransferase</keyword>
<keyword id="KW-0963">Cytoplasm</keyword>
<keyword id="KW-0663">Pyridoxal phosphate</keyword>
<keyword id="KW-0664">Pyridoxine biosynthesis</keyword>
<keyword id="KW-1185">Reference proteome</keyword>
<keyword id="KW-0718">Serine biosynthesis</keyword>
<keyword id="KW-0808">Transferase</keyword>
<proteinExistence type="inferred from homology"/>
<organism>
    <name type="scientific">Lactiplantibacillus plantarum (strain ATCC BAA-793 / NCIMB 8826 / WCFS1)</name>
    <name type="common">Lactobacillus plantarum</name>
    <dbReference type="NCBI Taxonomy" id="220668"/>
    <lineage>
        <taxon>Bacteria</taxon>
        <taxon>Bacillati</taxon>
        <taxon>Bacillota</taxon>
        <taxon>Bacilli</taxon>
        <taxon>Lactobacillales</taxon>
        <taxon>Lactobacillaceae</taxon>
        <taxon>Lactiplantibacillus</taxon>
    </lineage>
</organism>
<feature type="chain" id="PRO_0000150177" description="Phosphoserine aminotransferase">
    <location>
        <begin position="1"/>
        <end position="357"/>
    </location>
</feature>
<feature type="binding site" evidence="1">
    <location>
        <position position="41"/>
    </location>
    <ligand>
        <name>L-glutamate</name>
        <dbReference type="ChEBI" id="CHEBI:29985"/>
    </ligand>
</feature>
<feature type="binding site" evidence="1">
    <location>
        <begin position="75"/>
        <end position="76"/>
    </location>
    <ligand>
        <name>pyridoxal 5'-phosphate</name>
        <dbReference type="ChEBI" id="CHEBI:597326"/>
    </ligand>
</feature>
<feature type="binding site" evidence="1">
    <location>
        <position position="100"/>
    </location>
    <ligand>
        <name>pyridoxal 5'-phosphate</name>
        <dbReference type="ChEBI" id="CHEBI:597326"/>
    </ligand>
</feature>
<feature type="binding site" evidence="1">
    <location>
        <position position="150"/>
    </location>
    <ligand>
        <name>pyridoxal 5'-phosphate</name>
        <dbReference type="ChEBI" id="CHEBI:597326"/>
    </ligand>
</feature>
<feature type="binding site" evidence="1">
    <location>
        <position position="170"/>
    </location>
    <ligand>
        <name>pyridoxal 5'-phosphate</name>
        <dbReference type="ChEBI" id="CHEBI:597326"/>
    </ligand>
</feature>
<feature type="binding site" evidence="1">
    <location>
        <position position="193"/>
    </location>
    <ligand>
        <name>pyridoxal 5'-phosphate</name>
        <dbReference type="ChEBI" id="CHEBI:597326"/>
    </ligand>
</feature>
<feature type="binding site" evidence="1">
    <location>
        <begin position="234"/>
        <end position="235"/>
    </location>
    <ligand>
        <name>pyridoxal 5'-phosphate</name>
        <dbReference type="ChEBI" id="CHEBI:597326"/>
    </ligand>
</feature>
<feature type="modified residue" description="N6-(pyridoxal phosphate)lysine" evidence="1">
    <location>
        <position position="194"/>
    </location>
</feature>
<dbReference type="EC" id="2.6.1.52" evidence="1"/>
<dbReference type="EMBL" id="AL935263">
    <property type="protein sequence ID" value="CCC77742.1"/>
    <property type="molecule type" value="Genomic_DNA"/>
</dbReference>
<dbReference type="RefSeq" id="WP_003641796.1">
    <property type="nucleotide sequence ID" value="NC_004567.2"/>
</dbReference>
<dbReference type="RefSeq" id="YP_004888256.1">
    <property type="nucleotide sequence ID" value="NC_004567.2"/>
</dbReference>
<dbReference type="SMR" id="Q88ZU5"/>
<dbReference type="STRING" id="220668.lp_0204"/>
<dbReference type="EnsemblBacteria" id="CCC77742">
    <property type="protein sequence ID" value="CCC77742"/>
    <property type="gene ID" value="lp_0204"/>
</dbReference>
<dbReference type="GeneID" id="77216857"/>
<dbReference type="KEGG" id="lpl:lp_0204"/>
<dbReference type="PATRIC" id="fig|220668.9.peg.168"/>
<dbReference type="eggNOG" id="COG1932">
    <property type="taxonomic scope" value="Bacteria"/>
</dbReference>
<dbReference type="HOGENOM" id="CLU_034866_0_2_9"/>
<dbReference type="OrthoDB" id="9809412at2"/>
<dbReference type="PhylomeDB" id="Q88ZU5"/>
<dbReference type="UniPathway" id="UPA00135">
    <property type="reaction ID" value="UER00197"/>
</dbReference>
<dbReference type="Proteomes" id="UP000000432">
    <property type="component" value="Chromosome"/>
</dbReference>
<dbReference type="GO" id="GO:0005737">
    <property type="term" value="C:cytoplasm"/>
    <property type="evidence" value="ECO:0007669"/>
    <property type="project" value="UniProtKB-SubCell"/>
</dbReference>
<dbReference type="GO" id="GO:0004648">
    <property type="term" value="F:O-phospho-L-serine:2-oxoglutarate aminotransferase activity"/>
    <property type="evidence" value="ECO:0007669"/>
    <property type="project" value="UniProtKB-UniRule"/>
</dbReference>
<dbReference type="GO" id="GO:0030170">
    <property type="term" value="F:pyridoxal phosphate binding"/>
    <property type="evidence" value="ECO:0007669"/>
    <property type="project" value="UniProtKB-UniRule"/>
</dbReference>
<dbReference type="GO" id="GO:0006564">
    <property type="term" value="P:L-serine biosynthetic process"/>
    <property type="evidence" value="ECO:0007669"/>
    <property type="project" value="UniProtKB-UniRule"/>
</dbReference>
<dbReference type="GO" id="GO:0008615">
    <property type="term" value="P:pyridoxine biosynthetic process"/>
    <property type="evidence" value="ECO:0007669"/>
    <property type="project" value="UniProtKB-KW"/>
</dbReference>
<dbReference type="FunFam" id="3.40.640.10:FF:000010">
    <property type="entry name" value="Phosphoserine aminotransferase"/>
    <property type="match status" value="1"/>
</dbReference>
<dbReference type="FunFam" id="3.90.1150.10:FF:000006">
    <property type="entry name" value="Phosphoserine aminotransferase"/>
    <property type="match status" value="1"/>
</dbReference>
<dbReference type="Gene3D" id="3.90.1150.10">
    <property type="entry name" value="Aspartate Aminotransferase, domain 1"/>
    <property type="match status" value="1"/>
</dbReference>
<dbReference type="Gene3D" id="3.40.640.10">
    <property type="entry name" value="Type I PLP-dependent aspartate aminotransferase-like (Major domain)"/>
    <property type="match status" value="1"/>
</dbReference>
<dbReference type="HAMAP" id="MF_00160">
    <property type="entry name" value="SerC_aminotrans_5"/>
    <property type="match status" value="1"/>
</dbReference>
<dbReference type="InterPro" id="IPR000192">
    <property type="entry name" value="Aminotrans_V_dom"/>
</dbReference>
<dbReference type="InterPro" id="IPR020578">
    <property type="entry name" value="Aminotrans_V_PyrdxlP_BS"/>
</dbReference>
<dbReference type="InterPro" id="IPR022278">
    <property type="entry name" value="Pser_aminoTfrase"/>
</dbReference>
<dbReference type="InterPro" id="IPR015424">
    <property type="entry name" value="PyrdxlP-dep_Trfase"/>
</dbReference>
<dbReference type="InterPro" id="IPR015421">
    <property type="entry name" value="PyrdxlP-dep_Trfase_major"/>
</dbReference>
<dbReference type="InterPro" id="IPR015422">
    <property type="entry name" value="PyrdxlP-dep_Trfase_small"/>
</dbReference>
<dbReference type="NCBIfam" id="NF003764">
    <property type="entry name" value="PRK05355.1"/>
    <property type="match status" value="1"/>
</dbReference>
<dbReference type="NCBIfam" id="TIGR01364">
    <property type="entry name" value="serC_1"/>
    <property type="match status" value="1"/>
</dbReference>
<dbReference type="PANTHER" id="PTHR43247">
    <property type="entry name" value="PHOSPHOSERINE AMINOTRANSFERASE"/>
    <property type="match status" value="1"/>
</dbReference>
<dbReference type="PANTHER" id="PTHR43247:SF1">
    <property type="entry name" value="PHOSPHOSERINE AMINOTRANSFERASE"/>
    <property type="match status" value="1"/>
</dbReference>
<dbReference type="Pfam" id="PF00266">
    <property type="entry name" value="Aminotran_5"/>
    <property type="match status" value="1"/>
</dbReference>
<dbReference type="PIRSF" id="PIRSF000525">
    <property type="entry name" value="SerC"/>
    <property type="match status" value="1"/>
</dbReference>
<dbReference type="SUPFAM" id="SSF53383">
    <property type="entry name" value="PLP-dependent transferases"/>
    <property type="match status" value="1"/>
</dbReference>
<dbReference type="PROSITE" id="PS00595">
    <property type="entry name" value="AA_TRANSFER_CLASS_5"/>
    <property type="match status" value="1"/>
</dbReference>
<comment type="function">
    <text evidence="1">Catalyzes the reversible conversion of 3-phosphohydroxypyruvate to phosphoserine and of 3-hydroxy-2-oxo-4-phosphonooxybutanoate to phosphohydroxythreonine.</text>
</comment>
<comment type="catalytic activity">
    <reaction evidence="1">
        <text>O-phospho-L-serine + 2-oxoglutarate = 3-phosphooxypyruvate + L-glutamate</text>
        <dbReference type="Rhea" id="RHEA:14329"/>
        <dbReference type="ChEBI" id="CHEBI:16810"/>
        <dbReference type="ChEBI" id="CHEBI:18110"/>
        <dbReference type="ChEBI" id="CHEBI:29985"/>
        <dbReference type="ChEBI" id="CHEBI:57524"/>
        <dbReference type="EC" id="2.6.1.52"/>
    </reaction>
</comment>
<comment type="catalytic activity">
    <reaction evidence="1">
        <text>4-(phosphooxy)-L-threonine + 2-oxoglutarate = (R)-3-hydroxy-2-oxo-4-phosphooxybutanoate + L-glutamate</text>
        <dbReference type="Rhea" id="RHEA:16573"/>
        <dbReference type="ChEBI" id="CHEBI:16810"/>
        <dbReference type="ChEBI" id="CHEBI:29985"/>
        <dbReference type="ChEBI" id="CHEBI:58452"/>
        <dbReference type="ChEBI" id="CHEBI:58538"/>
        <dbReference type="EC" id="2.6.1.52"/>
    </reaction>
</comment>
<comment type="cofactor">
    <cofactor evidence="1">
        <name>pyridoxal 5'-phosphate</name>
        <dbReference type="ChEBI" id="CHEBI:597326"/>
    </cofactor>
    <text evidence="1">Binds 1 pyridoxal phosphate per subunit.</text>
</comment>
<comment type="pathway">
    <text evidence="1">Amino-acid biosynthesis; L-serine biosynthesis; L-serine from 3-phospho-D-glycerate: step 2/3.</text>
</comment>
<comment type="subunit">
    <text evidence="1">Homodimer.</text>
</comment>
<comment type="subcellular location">
    <subcellularLocation>
        <location evidence="1">Cytoplasm</location>
    </subcellularLocation>
</comment>
<comment type="similarity">
    <text evidence="1">Belongs to the class-V pyridoxal-phosphate-dependent aminotransferase family. SerC subfamily.</text>
</comment>
<protein>
    <recommendedName>
        <fullName evidence="1">Phosphoserine aminotransferase</fullName>
        <ecNumber evidence="1">2.6.1.52</ecNumber>
    </recommendedName>
    <alternativeName>
        <fullName evidence="1">Phosphohydroxythreonine aminotransferase</fullName>
        <shortName evidence="1">PSAT</shortName>
    </alternativeName>
</protein>
<accession>Q88ZU5</accession>
<accession>F9UT11</accession>
<name>SERC_LACPL</name>
<gene>
    <name evidence="1" type="primary">serC</name>
    <name type="ordered locus">lp_0204</name>
</gene>